<proteinExistence type="evidence at transcript level"/>
<protein>
    <recommendedName>
        <fullName>Elongation factor 1-beta</fullName>
        <shortName>EF-1-beta</shortName>
    </recommendedName>
</protein>
<keyword id="KW-0251">Elongation factor</keyword>
<keyword id="KW-0597">Phosphoprotein</keyword>
<keyword id="KW-0648">Protein biosynthesis</keyword>
<keyword id="KW-1185">Reference proteome</keyword>
<dbReference type="EMBL" id="AF103726">
    <property type="protein sequence ID" value="AAD16874.1"/>
    <property type="molecule type" value="mRNA"/>
</dbReference>
<dbReference type="RefSeq" id="NP_990232.1">
    <property type="nucleotide sequence ID" value="NM_204901.1"/>
</dbReference>
<dbReference type="BMRB" id="Q9YGQ1"/>
<dbReference type="SMR" id="Q9YGQ1"/>
<dbReference type="FunCoup" id="Q9YGQ1">
    <property type="interactions" value="2783"/>
</dbReference>
<dbReference type="STRING" id="9031.ENSGALP00000013968"/>
<dbReference type="GeneID" id="395723"/>
<dbReference type="KEGG" id="gga:395723"/>
<dbReference type="CTD" id="1933"/>
<dbReference type="VEuPathDB" id="HostDB:geneid_395723"/>
<dbReference type="eggNOG" id="KOG1668">
    <property type="taxonomic scope" value="Eukaryota"/>
</dbReference>
<dbReference type="InParanoid" id="Q9YGQ1"/>
<dbReference type="OrthoDB" id="331763at2759"/>
<dbReference type="PRO" id="PR:Q9YGQ1"/>
<dbReference type="Proteomes" id="UP000000539">
    <property type="component" value="Unassembled WGS sequence"/>
</dbReference>
<dbReference type="GO" id="GO:0005829">
    <property type="term" value="C:cytosol"/>
    <property type="evidence" value="ECO:0000318"/>
    <property type="project" value="GO_Central"/>
</dbReference>
<dbReference type="GO" id="GO:0005853">
    <property type="term" value="C:eukaryotic translation elongation factor 1 complex"/>
    <property type="evidence" value="ECO:0007669"/>
    <property type="project" value="InterPro"/>
</dbReference>
<dbReference type="GO" id="GO:0005085">
    <property type="term" value="F:guanyl-nucleotide exchange factor activity"/>
    <property type="evidence" value="ECO:0000318"/>
    <property type="project" value="GO_Central"/>
</dbReference>
<dbReference type="GO" id="GO:0003746">
    <property type="term" value="F:translation elongation factor activity"/>
    <property type="evidence" value="ECO:0007669"/>
    <property type="project" value="UniProtKB-KW"/>
</dbReference>
<dbReference type="GO" id="GO:0006414">
    <property type="term" value="P:translational elongation"/>
    <property type="evidence" value="ECO:0000318"/>
    <property type="project" value="GO_Central"/>
</dbReference>
<dbReference type="CDD" id="cd00292">
    <property type="entry name" value="EF1B"/>
    <property type="match status" value="1"/>
</dbReference>
<dbReference type="CDD" id="cd10308">
    <property type="entry name" value="GST_C_eEF1b_like"/>
    <property type="match status" value="1"/>
</dbReference>
<dbReference type="FunFam" id="3.30.70.60:FF:000001">
    <property type="entry name" value="Elongation factor 1-beta 1 like"/>
    <property type="match status" value="1"/>
</dbReference>
<dbReference type="FunFam" id="1.20.1050.130:FF:000001">
    <property type="entry name" value="Putative Elongation factor 1-beta"/>
    <property type="match status" value="1"/>
</dbReference>
<dbReference type="Gene3D" id="1.20.1050.130">
    <property type="match status" value="1"/>
</dbReference>
<dbReference type="Gene3D" id="3.30.70.60">
    <property type="match status" value="1"/>
</dbReference>
<dbReference type="InterPro" id="IPR036219">
    <property type="entry name" value="eEF-1beta-like_sf"/>
</dbReference>
<dbReference type="InterPro" id="IPR018940">
    <property type="entry name" value="EF-1_beta_acid_region_euk"/>
</dbReference>
<dbReference type="InterPro" id="IPR049720">
    <property type="entry name" value="EF1B_bsu/dsu"/>
</dbReference>
<dbReference type="InterPro" id="IPR014038">
    <property type="entry name" value="EF1B_bsu/dsu_GNE"/>
</dbReference>
<dbReference type="InterPro" id="IPR036282">
    <property type="entry name" value="Glutathione-S-Trfase_C_sf"/>
</dbReference>
<dbReference type="InterPro" id="IPR014717">
    <property type="entry name" value="Transl_elong_EF1B/ribsomal_bS6"/>
</dbReference>
<dbReference type="InterPro" id="IPR001326">
    <property type="entry name" value="Transl_elong_EF1B_B/D_CS"/>
</dbReference>
<dbReference type="PANTHER" id="PTHR11595">
    <property type="entry name" value="EF-HAND AND COILED-COIL DOMAIN-CONTAINING FAMILY MEMBER"/>
    <property type="match status" value="1"/>
</dbReference>
<dbReference type="PANTHER" id="PTHR11595:SF21">
    <property type="entry name" value="ELONGATION FACTOR 1-BETA"/>
    <property type="match status" value="1"/>
</dbReference>
<dbReference type="Pfam" id="PF10587">
    <property type="entry name" value="EF-1_beta_acid"/>
    <property type="match status" value="1"/>
</dbReference>
<dbReference type="Pfam" id="PF00736">
    <property type="entry name" value="EF1_GNE"/>
    <property type="match status" value="1"/>
</dbReference>
<dbReference type="SMART" id="SM01182">
    <property type="entry name" value="EF-1_beta_acid"/>
    <property type="match status" value="1"/>
</dbReference>
<dbReference type="SMART" id="SM00888">
    <property type="entry name" value="EF1_GNE"/>
    <property type="match status" value="1"/>
</dbReference>
<dbReference type="SUPFAM" id="SSF54984">
    <property type="entry name" value="eEF-1beta-like"/>
    <property type="match status" value="1"/>
</dbReference>
<dbReference type="SUPFAM" id="SSF47616">
    <property type="entry name" value="GST C-terminal domain-like"/>
    <property type="match status" value="1"/>
</dbReference>
<dbReference type="PROSITE" id="PS00824">
    <property type="entry name" value="EF1BD_1"/>
    <property type="match status" value="1"/>
</dbReference>
<dbReference type="PROSITE" id="PS00825">
    <property type="entry name" value="EF1BD_2"/>
    <property type="match status" value="1"/>
</dbReference>
<sequence length="225" mass="24762">MGFGDLKSAAGLRVLNDFLADKSYIEGYVPSQADIAVFEAVGAPPPADLFHALRWYNHIKSYEKEKASLPGVKKALGKYGPADVEDTTGSGATDSKDDDDIDLFGSDDEEESEEAKRLREERLAQYESKKAKKPALVAKSSILLDVKPWDDETDMAKLEECVRSIQADGLVWGSSKLVPVGYGIKKLQIQCVVEDDKVGTDMLEEQITAFEDYVQSMDVAAFNKI</sequence>
<accession>Q9YGQ1</accession>
<name>EF1B_CHICK</name>
<evidence type="ECO:0000250" key="1"/>
<evidence type="ECO:0000250" key="2">
    <source>
        <dbReference type="UniProtKB" id="A6IPG1"/>
    </source>
</evidence>
<evidence type="ECO:0000250" key="3">
    <source>
        <dbReference type="UniProtKB" id="O70251"/>
    </source>
</evidence>
<evidence type="ECO:0000250" key="4">
    <source>
        <dbReference type="UniProtKB" id="P32471"/>
    </source>
</evidence>
<evidence type="ECO:0000256" key="5">
    <source>
        <dbReference type="SAM" id="MobiDB-lite"/>
    </source>
</evidence>
<evidence type="ECO:0000305" key="6"/>
<feature type="initiator methionine" description="Removed" evidence="1">
    <location>
        <position position="1"/>
    </location>
</feature>
<feature type="chain" id="PRO_0000155025" description="Elongation factor 1-beta">
    <location>
        <begin position="2"/>
        <end position="225"/>
    </location>
</feature>
<feature type="domain" description="GST C-terminal">
    <location>
        <begin position="2"/>
        <end position="84"/>
    </location>
</feature>
<feature type="region of interest" description="Disordered" evidence="5">
    <location>
        <begin position="80"/>
        <end position="114"/>
    </location>
</feature>
<feature type="compositionally biased region" description="Acidic residues" evidence="5">
    <location>
        <begin position="96"/>
        <end position="113"/>
    </location>
</feature>
<feature type="modified residue" description="Phosphoserine; by CK2" evidence="1">
    <location>
        <position position="106"/>
    </location>
</feature>
<comment type="function">
    <text evidence="4">Catalytic subunit of the guanine nucleotide exchange factor (GEF) (eEF1B subcomplex) of the eukaryotic elongation factor 1 complex (eEF1). Stimulates the exchange of GDP for GTP on elongation factor 1A (eEF1A), probably by displacing GDP from the nucleotide binding pocket in eEF1A.</text>
</comment>
<comment type="subunit">
    <text evidence="2 3">EF-1 is composed of 4 subunits: alpha, beta (alpha subunit of the eEF1B subcomplex), delta (beta subunit of the eEF1B subcomplex), and gamma (gamma subunit of the eEF1B subcomplex) (By similarity). Interacts with elongation factor EEF1A1 (By similarity).</text>
</comment>
<comment type="PTM">
    <text evidence="1">Phosphorylation affects the GDP/GTP exchange rate.</text>
</comment>
<comment type="similarity">
    <text evidence="6">Belongs to the EF-1-beta/EF-1-delta family.</text>
</comment>
<organism>
    <name type="scientific">Gallus gallus</name>
    <name type="common">Chicken</name>
    <dbReference type="NCBI Taxonomy" id="9031"/>
    <lineage>
        <taxon>Eukaryota</taxon>
        <taxon>Metazoa</taxon>
        <taxon>Chordata</taxon>
        <taxon>Craniata</taxon>
        <taxon>Vertebrata</taxon>
        <taxon>Euteleostomi</taxon>
        <taxon>Archelosauria</taxon>
        <taxon>Archosauria</taxon>
        <taxon>Dinosauria</taxon>
        <taxon>Saurischia</taxon>
        <taxon>Theropoda</taxon>
        <taxon>Coelurosauria</taxon>
        <taxon>Aves</taxon>
        <taxon>Neognathae</taxon>
        <taxon>Galloanserae</taxon>
        <taxon>Galliformes</taxon>
        <taxon>Phasianidae</taxon>
        <taxon>Phasianinae</taxon>
        <taxon>Gallus</taxon>
    </lineage>
</organism>
<reference key="1">
    <citation type="submission" date="1998-11" db="EMBL/GenBank/DDBJ databases">
        <title>Developmental expression of chicken peptide elongation factor 1-beta.</title>
        <authorList>
            <person name="Ghatpande S.K."/>
            <person name="Siddiqui M.A.Q."/>
        </authorList>
    </citation>
    <scope>NUCLEOTIDE SEQUENCE [MRNA]</scope>
    <source>
        <strain>White leghorn</strain>
    </source>
</reference>
<gene>
    <name type="primary">EEF1B</name>
</gene>